<accession>A4ISX2</accession>
<comment type="function">
    <text evidence="1">Part of the Sec protein translocase complex. Interacts with the SecYEG preprotein conducting channel. Has a central role in coupling the hydrolysis of ATP to the transfer of proteins into and across the cell membrane, serving as an ATP-driven molecular motor driving the stepwise translocation of polypeptide chains across the membrane.</text>
</comment>
<comment type="catalytic activity">
    <reaction evidence="1">
        <text>ATP + H2O + cellular proteinSide 1 = ADP + phosphate + cellular proteinSide 2.</text>
        <dbReference type="EC" id="7.4.2.8"/>
    </reaction>
</comment>
<comment type="subunit">
    <text evidence="1">Monomer and homodimer. Part of the essential Sec protein translocation apparatus which comprises SecA, SecYEG and auxiliary proteins SecDF. Other proteins may also be involved.</text>
</comment>
<comment type="subcellular location">
    <subcellularLocation>
        <location evidence="1">Cell membrane</location>
        <topology evidence="1">Peripheral membrane protein</topology>
        <orientation evidence="1">Cytoplasmic side</orientation>
    </subcellularLocation>
    <subcellularLocation>
        <location evidence="1">Cytoplasm</location>
    </subcellularLocation>
    <text evidence="1">Distribution is 50-50.</text>
</comment>
<comment type="similarity">
    <text evidence="1">Belongs to the SecA family.</text>
</comment>
<reference key="1">
    <citation type="journal article" date="2007" name="Proc. Natl. Acad. Sci. U.S.A.">
        <title>Genome and proteome of long-chain alkane degrading Geobacillus thermodenitrificans NG80-2 isolated from a deep-subsurface oil reservoir.</title>
        <authorList>
            <person name="Feng L."/>
            <person name="Wang W."/>
            <person name="Cheng J."/>
            <person name="Ren Y."/>
            <person name="Zhao G."/>
            <person name="Gao C."/>
            <person name="Tang Y."/>
            <person name="Liu X."/>
            <person name="Han W."/>
            <person name="Peng X."/>
            <person name="Liu R."/>
            <person name="Wang L."/>
        </authorList>
    </citation>
    <scope>NUCLEOTIDE SEQUENCE [LARGE SCALE GENOMIC DNA]</scope>
    <source>
        <strain>NG80-2</strain>
    </source>
</reference>
<name>SECA2_GEOTN</name>
<evidence type="ECO:0000255" key="1">
    <source>
        <dbReference type="HAMAP-Rule" id="MF_01382"/>
    </source>
</evidence>
<dbReference type="EC" id="7.4.2.8" evidence="1"/>
<dbReference type="EMBL" id="CP000557">
    <property type="protein sequence ID" value="ABO68426.1"/>
    <property type="molecule type" value="Genomic_DNA"/>
</dbReference>
<dbReference type="RefSeq" id="WP_011888224.1">
    <property type="nucleotide sequence ID" value="NC_009328.1"/>
</dbReference>
<dbReference type="SMR" id="A4ISX2"/>
<dbReference type="GeneID" id="87622773"/>
<dbReference type="KEGG" id="gtn:GTNG_3081"/>
<dbReference type="eggNOG" id="COG0653">
    <property type="taxonomic scope" value="Bacteria"/>
</dbReference>
<dbReference type="HOGENOM" id="CLU_005314_3_2_9"/>
<dbReference type="Proteomes" id="UP000001578">
    <property type="component" value="Chromosome"/>
</dbReference>
<dbReference type="GO" id="GO:0031522">
    <property type="term" value="C:cell envelope Sec protein transport complex"/>
    <property type="evidence" value="ECO:0007669"/>
    <property type="project" value="TreeGrafter"/>
</dbReference>
<dbReference type="GO" id="GO:0005829">
    <property type="term" value="C:cytosol"/>
    <property type="evidence" value="ECO:0007669"/>
    <property type="project" value="TreeGrafter"/>
</dbReference>
<dbReference type="GO" id="GO:0005886">
    <property type="term" value="C:plasma membrane"/>
    <property type="evidence" value="ECO:0007669"/>
    <property type="project" value="UniProtKB-SubCell"/>
</dbReference>
<dbReference type="GO" id="GO:0005524">
    <property type="term" value="F:ATP binding"/>
    <property type="evidence" value="ECO:0007669"/>
    <property type="project" value="UniProtKB-UniRule"/>
</dbReference>
<dbReference type="GO" id="GO:0008564">
    <property type="term" value="F:protein-exporting ATPase activity"/>
    <property type="evidence" value="ECO:0007669"/>
    <property type="project" value="UniProtKB-EC"/>
</dbReference>
<dbReference type="GO" id="GO:0065002">
    <property type="term" value="P:intracellular protein transmembrane transport"/>
    <property type="evidence" value="ECO:0007669"/>
    <property type="project" value="UniProtKB-UniRule"/>
</dbReference>
<dbReference type="GO" id="GO:0017038">
    <property type="term" value="P:protein import"/>
    <property type="evidence" value="ECO:0007669"/>
    <property type="project" value="InterPro"/>
</dbReference>
<dbReference type="GO" id="GO:0006605">
    <property type="term" value="P:protein targeting"/>
    <property type="evidence" value="ECO:0007669"/>
    <property type="project" value="UniProtKB-UniRule"/>
</dbReference>
<dbReference type="GO" id="GO:0043952">
    <property type="term" value="P:protein transport by the Sec complex"/>
    <property type="evidence" value="ECO:0007669"/>
    <property type="project" value="TreeGrafter"/>
</dbReference>
<dbReference type="CDD" id="cd17928">
    <property type="entry name" value="DEXDc_SecA"/>
    <property type="match status" value="1"/>
</dbReference>
<dbReference type="CDD" id="cd18803">
    <property type="entry name" value="SF2_C_secA"/>
    <property type="match status" value="1"/>
</dbReference>
<dbReference type="FunFam" id="3.40.50.300:FF:000429">
    <property type="entry name" value="Preprotein translocase subunit SecA"/>
    <property type="match status" value="1"/>
</dbReference>
<dbReference type="FunFam" id="3.90.1440.10:FF:000001">
    <property type="entry name" value="Preprotein translocase subunit SecA"/>
    <property type="match status" value="1"/>
</dbReference>
<dbReference type="Gene3D" id="1.10.3060.10">
    <property type="entry name" value="Helical scaffold and wing domains of SecA"/>
    <property type="match status" value="1"/>
</dbReference>
<dbReference type="Gene3D" id="3.40.50.300">
    <property type="entry name" value="P-loop containing nucleotide triphosphate hydrolases"/>
    <property type="match status" value="3"/>
</dbReference>
<dbReference type="Gene3D" id="3.90.1440.10">
    <property type="entry name" value="SecA, preprotein cross-linking domain"/>
    <property type="match status" value="1"/>
</dbReference>
<dbReference type="HAMAP" id="MF_01382">
    <property type="entry name" value="SecA"/>
    <property type="match status" value="1"/>
</dbReference>
<dbReference type="InterPro" id="IPR014001">
    <property type="entry name" value="Helicase_ATP-bd"/>
</dbReference>
<dbReference type="InterPro" id="IPR001650">
    <property type="entry name" value="Helicase_C-like"/>
</dbReference>
<dbReference type="InterPro" id="IPR027417">
    <property type="entry name" value="P-loop_NTPase"/>
</dbReference>
<dbReference type="InterPro" id="IPR000185">
    <property type="entry name" value="SecA"/>
</dbReference>
<dbReference type="InterPro" id="IPR030908">
    <property type="entry name" value="SecA2_Bac_anthr"/>
</dbReference>
<dbReference type="InterPro" id="IPR011115">
    <property type="entry name" value="SecA_DEAD"/>
</dbReference>
<dbReference type="InterPro" id="IPR014018">
    <property type="entry name" value="SecA_motor_DEAD"/>
</dbReference>
<dbReference type="InterPro" id="IPR011130">
    <property type="entry name" value="SecA_preprotein_X-link_dom"/>
</dbReference>
<dbReference type="InterPro" id="IPR044722">
    <property type="entry name" value="SecA_SF2_C"/>
</dbReference>
<dbReference type="InterPro" id="IPR011116">
    <property type="entry name" value="SecA_Wing/Scaffold"/>
</dbReference>
<dbReference type="InterPro" id="IPR036266">
    <property type="entry name" value="SecA_Wing/Scaffold_sf"/>
</dbReference>
<dbReference type="InterPro" id="IPR036670">
    <property type="entry name" value="SecA_X-link_sf"/>
</dbReference>
<dbReference type="NCBIfam" id="NF006630">
    <property type="entry name" value="PRK09200.1"/>
    <property type="match status" value="1"/>
</dbReference>
<dbReference type="NCBIfam" id="TIGR00963">
    <property type="entry name" value="secA"/>
    <property type="match status" value="1"/>
</dbReference>
<dbReference type="NCBIfam" id="TIGR04397">
    <property type="entry name" value="SecA2_Bac_anthr"/>
    <property type="match status" value="1"/>
</dbReference>
<dbReference type="PANTHER" id="PTHR30612:SF0">
    <property type="entry name" value="CHLOROPLAST PROTEIN-TRANSPORTING ATPASE"/>
    <property type="match status" value="1"/>
</dbReference>
<dbReference type="PANTHER" id="PTHR30612">
    <property type="entry name" value="SECA INNER MEMBRANE COMPONENT OF SEC PROTEIN SECRETION SYSTEM"/>
    <property type="match status" value="1"/>
</dbReference>
<dbReference type="Pfam" id="PF21090">
    <property type="entry name" value="P-loop_SecA"/>
    <property type="match status" value="1"/>
</dbReference>
<dbReference type="Pfam" id="PF07517">
    <property type="entry name" value="SecA_DEAD"/>
    <property type="match status" value="1"/>
</dbReference>
<dbReference type="Pfam" id="PF01043">
    <property type="entry name" value="SecA_PP_bind"/>
    <property type="match status" value="1"/>
</dbReference>
<dbReference type="Pfam" id="PF07516">
    <property type="entry name" value="SecA_SW"/>
    <property type="match status" value="1"/>
</dbReference>
<dbReference type="PRINTS" id="PR00906">
    <property type="entry name" value="SECA"/>
</dbReference>
<dbReference type="SMART" id="SM00957">
    <property type="entry name" value="SecA_DEAD"/>
    <property type="match status" value="1"/>
</dbReference>
<dbReference type="SMART" id="SM00958">
    <property type="entry name" value="SecA_PP_bind"/>
    <property type="match status" value="1"/>
</dbReference>
<dbReference type="SUPFAM" id="SSF81886">
    <property type="entry name" value="Helical scaffold and wing domains of SecA"/>
    <property type="match status" value="1"/>
</dbReference>
<dbReference type="SUPFAM" id="SSF52540">
    <property type="entry name" value="P-loop containing nucleoside triphosphate hydrolases"/>
    <property type="match status" value="2"/>
</dbReference>
<dbReference type="SUPFAM" id="SSF81767">
    <property type="entry name" value="Pre-protein crosslinking domain of SecA"/>
    <property type="match status" value="1"/>
</dbReference>
<dbReference type="PROSITE" id="PS51196">
    <property type="entry name" value="SECA_MOTOR_DEAD"/>
    <property type="match status" value="1"/>
</dbReference>
<gene>
    <name evidence="1" type="primary">secA2</name>
    <name type="ordered locus">GTNG_3081</name>
</gene>
<keyword id="KW-0067">ATP-binding</keyword>
<keyword id="KW-1003">Cell membrane</keyword>
<keyword id="KW-0963">Cytoplasm</keyword>
<keyword id="KW-0472">Membrane</keyword>
<keyword id="KW-0547">Nucleotide-binding</keyword>
<keyword id="KW-0653">Protein transport</keyword>
<keyword id="KW-1278">Translocase</keyword>
<keyword id="KW-0811">Translocation</keyword>
<keyword id="KW-0813">Transport</keyword>
<organism>
    <name type="scientific">Geobacillus thermodenitrificans (strain NG80-2)</name>
    <dbReference type="NCBI Taxonomy" id="420246"/>
    <lineage>
        <taxon>Bacteria</taxon>
        <taxon>Bacillati</taxon>
        <taxon>Bacillota</taxon>
        <taxon>Bacilli</taxon>
        <taxon>Bacillales</taxon>
        <taxon>Anoxybacillaceae</taxon>
        <taxon>Geobacillus</taxon>
    </lineage>
</organism>
<sequence length="788" mass="90286">MLSLLKRAIGYTNERQLKKYMRVVEQINRMEPQMEKLTDAELRRKTDEFKEQLASGKSVNDIQVEAFAVVREVAKRVLGMRHFDVQLIGGLVLAEGNIAEMATGEGKTLVASLPSYLRALEGKGVHVITANDYLAKRDRNLIGQIHEFLGLTVGLNLPLMSPQEKKQAYQADITYGIGTEFGFDYLRDHMVYDASDKVQRPYHYAIIDEIDSVLIDEAKTPLIIAGKTRSSTELHYIAARLVKRFEREVDYIYDGETKTVNLTDEGIEKVEKAFGIDNLYDAEHQVLYHYVIQALRAHVLFQRDVDYIIRDGKVLLVDAFTGRVMEGRSLSDGLHQAIEAKEGLEITEENKTYASITIQNYFRMYPILSGMTGTAKTEEKEFQRIYGIDVIPIPTNRPKIRVDLPDRVYMTRHDKYVAVAKEVKRRHESGQPVLIGTTSILQSEEVAKYLDQEQVPYELLNAKTVEQEAEVIARAGQRGRVTIATNIAGRGTDILLGEGVNELGGLHVLGTERHESRRIDNQLKGRAGRQGDPGSSQFFISLEDDMFRRFAAEETEKLKAKLKTDETGCILNNDIHEFVDKVQRIVEGMNFSVREYNLKLDDVMNEQRNVIYQIRDRVLEENDRVALVVPMIRSACDRIVDAYALSEQIPEEWDVRRMTEELNRIVYRTPITFDQPPADLEDVKRKVAEAVESYVALLEKKKAHTQLQTLLKSVMLTVIDDYWMRHLDQMALLKEGIGLRHYQQEDPIRLYQKEGFEMFKAMYEVIEKEISVHTARLLQSLEQEEGQS</sequence>
<feature type="chain" id="PRO_0000318358" description="Protein translocase subunit SecA 2">
    <location>
        <begin position="1"/>
        <end position="788"/>
    </location>
</feature>
<feature type="binding site" evidence="1">
    <location>
        <position position="86"/>
    </location>
    <ligand>
        <name>ATP</name>
        <dbReference type="ChEBI" id="CHEBI:30616"/>
    </ligand>
</feature>
<feature type="binding site" evidence="1">
    <location>
        <begin position="104"/>
        <end position="108"/>
    </location>
    <ligand>
        <name>ATP</name>
        <dbReference type="ChEBI" id="CHEBI:30616"/>
    </ligand>
</feature>
<feature type="binding site" evidence="1">
    <location>
        <position position="493"/>
    </location>
    <ligand>
        <name>ATP</name>
        <dbReference type="ChEBI" id="CHEBI:30616"/>
    </ligand>
</feature>
<protein>
    <recommendedName>
        <fullName evidence="1">Protein translocase subunit SecA 2</fullName>
        <ecNumber evidence="1">7.4.2.8</ecNumber>
    </recommendedName>
</protein>
<proteinExistence type="inferred from homology"/>